<proteinExistence type="inferred from homology"/>
<feature type="chain" id="PRO_0000238597" description="Sorting nexin MVP1">
    <location>
        <begin position="1"/>
        <end position="509"/>
    </location>
</feature>
<feature type="domain" description="PX" evidence="2">
    <location>
        <begin position="126"/>
        <end position="245"/>
    </location>
</feature>
<feature type="region of interest" description="Disordered" evidence="3">
    <location>
        <begin position="1"/>
        <end position="28"/>
    </location>
</feature>
<feature type="compositionally biased region" description="Polar residues" evidence="3">
    <location>
        <begin position="1"/>
        <end position="25"/>
    </location>
</feature>
<feature type="binding site" evidence="1">
    <location>
        <position position="170"/>
    </location>
    <ligand>
        <name>a 1,2-diacyl-sn-glycero-3-phospho-(1D-myo-inositol-3-phosphate)</name>
        <dbReference type="ChEBI" id="CHEBI:58088"/>
    </ligand>
</feature>
<feature type="binding site" evidence="1">
    <location>
        <position position="172"/>
    </location>
    <ligand>
        <name>a 1,2-diacyl-sn-glycero-3-phospho-(1D-myo-inositol-3-phosphate)</name>
        <dbReference type="ChEBI" id="CHEBI:58088"/>
    </ligand>
</feature>
<feature type="binding site" evidence="1">
    <location>
        <position position="196"/>
    </location>
    <ligand>
        <name>a 1,2-diacyl-sn-glycero-3-phospho-(1D-myo-inositol-3-phosphate)</name>
        <dbReference type="ChEBI" id="CHEBI:58088"/>
    </ligand>
</feature>
<feature type="binding site" evidence="1">
    <location>
        <position position="211"/>
    </location>
    <ligand>
        <name>a 1,2-diacyl-sn-glycero-3-phospho-(1D-myo-inositol-3-phosphate)</name>
        <dbReference type="ChEBI" id="CHEBI:58088"/>
    </ligand>
</feature>
<dbReference type="EMBL" id="CR380956">
    <property type="protein sequence ID" value="CAG61173.1"/>
    <property type="molecule type" value="Genomic_DNA"/>
</dbReference>
<dbReference type="RefSeq" id="XP_448222.1">
    <property type="nucleotide sequence ID" value="XM_448222.1"/>
</dbReference>
<dbReference type="SMR" id="Q6FNH2"/>
<dbReference type="FunCoup" id="Q6FNH2">
    <property type="interactions" value="182"/>
</dbReference>
<dbReference type="STRING" id="284593.Q6FNH2"/>
<dbReference type="EnsemblFungi" id="CAGL0J11704g-T">
    <property type="protein sequence ID" value="CAGL0J11704g-T-p1"/>
    <property type="gene ID" value="CAGL0J11704g"/>
</dbReference>
<dbReference type="KEGG" id="cgr:2889462"/>
<dbReference type="CGD" id="CAL0133560">
    <property type="gene designation" value="CAGL0J11704g"/>
</dbReference>
<dbReference type="VEuPathDB" id="FungiDB:CAGL0J11704g"/>
<dbReference type="eggNOG" id="KOG2273">
    <property type="taxonomic scope" value="Eukaryota"/>
</dbReference>
<dbReference type="HOGENOM" id="CLU_009058_2_0_1"/>
<dbReference type="InParanoid" id="Q6FNH2"/>
<dbReference type="OMA" id="WEYAGAK"/>
<dbReference type="Proteomes" id="UP000002428">
    <property type="component" value="Chromosome J"/>
</dbReference>
<dbReference type="GO" id="GO:0005829">
    <property type="term" value="C:cytosol"/>
    <property type="evidence" value="ECO:0007669"/>
    <property type="project" value="GOC"/>
</dbReference>
<dbReference type="GO" id="GO:0005768">
    <property type="term" value="C:endosome"/>
    <property type="evidence" value="ECO:0007669"/>
    <property type="project" value="EnsemblFungi"/>
</dbReference>
<dbReference type="GO" id="GO:0016020">
    <property type="term" value="C:membrane"/>
    <property type="evidence" value="ECO:0007669"/>
    <property type="project" value="UniProtKB-SubCell"/>
</dbReference>
<dbReference type="GO" id="GO:0005634">
    <property type="term" value="C:nucleus"/>
    <property type="evidence" value="ECO:0007669"/>
    <property type="project" value="EnsemblFungi"/>
</dbReference>
<dbReference type="GO" id="GO:0042802">
    <property type="term" value="F:identical protein binding"/>
    <property type="evidence" value="ECO:0007669"/>
    <property type="project" value="EnsemblFungi"/>
</dbReference>
<dbReference type="GO" id="GO:0032266">
    <property type="term" value="F:phosphatidylinositol-3-phosphate binding"/>
    <property type="evidence" value="ECO:0007669"/>
    <property type="project" value="EnsemblFungi"/>
</dbReference>
<dbReference type="GO" id="GO:0097320">
    <property type="term" value="P:plasma membrane tubulation"/>
    <property type="evidence" value="ECO:0007669"/>
    <property type="project" value="EnsemblFungi"/>
</dbReference>
<dbReference type="GO" id="GO:0006623">
    <property type="term" value="P:protein targeting to vacuole"/>
    <property type="evidence" value="ECO:0007669"/>
    <property type="project" value="EnsemblFungi"/>
</dbReference>
<dbReference type="GO" id="GO:0042147">
    <property type="term" value="P:retrograde transport, endosome to Golgi"/>
    <property type="evidence" value="ECO:0007669"/>
    <property type="project" value="EnsemblFungi"/>
</dbReference>
<dbReference type="CDD" id="cd07597">
    <property type="entry name" value="BAR_SNX8"/>
    <property type="match status" value="1"/>
</dbReference>
<dbReference type="CDD" id="cd06866">
    <property type="entry name" value="PX_SNX8_Mvp1p_like"/>
    <property type="match status" value="1"/>
</dbReference>
<dbReference type="FunFam" id="3.30.1520.10:FF:000042">
    <property type="entry name" value="Sorting nexin mvp1"/>
    <property type="match status" value="1"/>
</dbReference>
<dbReference type="Gene3D" id="1.20.1270.60">
    <property type="entry name" value="Arfaptin homology (AH) domain/BAR domain"/>
    <property type="match status" value="1"/>
</dbReference>
<dbReference type="Gene3D" id="3.30.1520.10">
    <property type="entry name" value="Phox-like domain"/>
    <property type="match status" value="1"/>
</dbReference>
<dbReference type="InterPro" id="IPR027267">
    <property type="entry name" value="AH/BAR_dom_sf"/>
</dbReference>
<dbReference type="InterPro" id="IPR001683">
    <property type="entry name" value="PX_dom"/>
</dbReference>
<dbReference type="InterPro" id="IPR036871">
    <property type="entry name" value="PX_dom_sf"/>
</dbReference>
<dbReference type="InterPro" id="IPR028662">
    <property type="entry name" value="SNX8/Mvp1"/>
</dbReference>
<dbReference type="InterPro" id="IPR035704">
    <property type="entry name" value="SNX8/Mvp1_PX"/>
</dbReference>
<dbReference type="InterPro" id="IPR045734">
    <property type="entry name" value="Snx8_BAR_dom"/>
</dbReference>
<dbReference type="PANTHER" id="PTHR47554">
    <property type="entry name" value="SORTING NEXIN MVP1"/>
    <property type="match status" value="1"/>
</dbReference>
<dbReference type="PANTHER" id="PTHR47554:SF1">
    <property type="entry name" value="SORTING NEXIN MVP1"/>
    <property type="match status" value="1"/>
</dbReference>
<dbReference type="Pfam" id="PF00787">
    <property type="entry name" value="PX"/>
    <property type="match status" value="1"/>
</dbReference>
<dbReference type="Pfam" id="PF19566">
    <property type="entry name" value="Snx8_BAR_dom"/>
    <property type="match status" value="1"/>
</dbReference>
<dbReference type="SMART" id="SM00312">
    <property type="entry name" value="PX"/>
    <property type="match status" value="1"/>
</dbReference>
<dbReference type="SUPFAM" id="SSF64268">
    <property type="entry name" value="PX domain"/>
    <property type="match status" value="1"/>
</dbReference>
<dbReference type="PROSITE" id="PS50195">
    <property type="entry name" value="PX"/>
    <property type="match status" value="1"/>
</dbReference>
<gene>
    <name type="primary">MVP1</name>
    <name type="ordered locus">CAGL0J11704g</name>
</gene>
<protein>
    <recommendedName>
        <fullName>Sorting nexin MVP1</fullName>
    </recommendedName>
</protein>
<reference key="1">
    <citation type="journal article" date="2004" name="Nature">
        <title>Genome evolution in yeasts.</title>
        <authorList>
            <person name="Dujon B."/>
            <person name="Sherman D."/>
            <person name="Fischer G."/>
            <person name="Durrens P."/>
            <person name="Casaregola S."/>
            <person name="Lafontaine I."/>
            <person name="de Montigny J."/>
            <person name="Marck C."/>
            <person name="Neuveglise C."/>
            <person name="Talla E."/>
            <person name="Goffard N."/>
            <person name="Frangeul L."/>
            <person name="Aigle M."/>
            <person name="Anthouard V."/>
            <person name="Babour A."/>
            <person name="Barbe V."/>
            <person name="Barnay S."/>
            <person name="Blanchin S."/>
            <person name="Beckerich J.-M."/>
            <person name="Beyne E."/>
            <person name="Bleykasten C."/>
            <person name="Boisrame A."/>
            <person name="Boyer J."/>
            <person name="Cattolico L."/>
            <person name="Confanioleri F."/>
            <person name="de Daruvar A."/>
            <person name="Despons L."/>
            <person name="Fabre E."/>
            <person name="Fairhead C."/>
            <person name="Ferry-Dumazet H."/>
            <person name="Groppi A."/>
            <person name="Hantraye F."/>
            <person name="Hennequin C."/>
            <person name="Jauniaux N."/>
            <person name="Joyet P."/>
            <person name="Kachouri R."/>
            <person name="Kerrest A."/>
            <person name="Koszul R."/>
            <person name="Lemaire M."/>
            <person name="Lesur I."/>
            <person name="Ma L."/>
            <person name="Muller H."/>
            <person name="Nicaud J.-M."/>
            <person name="Nikolski M."/>
            <person name="Oztas S."/>
            <person name="Ozier-Kalogeropoulos O."/>
            <person name="Pellenz S."/>
            <person name="Potier S."/>
            <person name="Richard G.-F."/>
            <person name="Straub M.-L."/>
            <person name="Suleau A."/>
            <person name="Swennen D."/>
            <person name="Tekaia F."/>
            <person name="Wesolowski-Louvel M."/>
            <person name="Westhof E."/>
            <person name="Wirth B."/>
            <person name="Zeniou-Meyer M."/>
            <person name="Zivanovic Y."/>
            <person name="Bolotin-Fukuhara M."/>
            <person name="Thierry A."/>
            <person name="Bouchier C."/>
            <person name="Caudron B."/>
            <person name="Scarpelli C."/>
            <person name="Gaillardin C."/>
            <person name="Weissenbach J."/>
            <person name="Wincker P."/>
            <person name="Souciet J.-L."/>
        </authorList>
    </citation>
    <scope>NUCLEOTIDE SEQUENCE [LARGE SCALE GENOMIC DNA]</scope>
    <source>
        <strain>ATCC 2001 / BCRC 20586 / JCM 3761 / NBRC 0622 / NRRL Y-65 / CBS 138</strain>
    </source>
</reference>
<name>MVP1_CANGA</name>
<evidence type="ECO:0000250" key="1"/>
<evidence type="ECO:0000255" key="2">
    <source>
        <dbReference type="PROSITE-ProRule" id="PRU00147"/>
    </source>
</evidence>
<evidence type="ECO:0000256" key="3">
    <source>
        <dbReference type="SAM" id="MobiDB-lite"/>
    </source>
</evidence>
<evidence type="ECO:0000305" key="4"/>
<keyword id="KW-0963">Cytoplasm</keyword>
<keyword id="KW-0472">Membrane</keyword>
<keyword id="KW-0653">Protein transport</keyword>
<keyword id="KW-1185">Reference proteome</keyword>
<keyword id="KW-0813">Transport</keyword>
<accession>Q6FNH2</accession>
<comment type="function">
    <text evidence="1">Required for vacuolar protein sorting.</text>
</comment>
<comment type="subcellular location">
    <subcellularLocation>
        <location evidence="1">Cytoplasm</location>
    </subcellularLocation>
    <subcellularLocation>
        <location evidence="1">Membrane</location>
        <topology evidence="1">Peripheral membrane protein</topology>
        <orientation evidence="1">Cytoplasmic side</orientation>
    </subcellularLocation>
</comment>
<comment type="domain">
    <text evidence="1">The PX domain binds phosphatidylinositol 3-phosphate which is necessary for peripheral membrane localization.</text>
</comment>
<comment type="similarity">
    <text evidence="4">Belongs to the sorting nexin family.</text>
</comment>
<organism>
    <name type="scientific">Candida glabrata (strain ATCC 2001 / BCRC 20586 / JCM 3761 / NBRC 0622 / NRRL Y-65 / CBS 138)</name>
    <name type="common">Yeast</name>
    <name type="synonym">Nakaseomyces glabratus</name>
    <dbReference type="NCBI Taxonomy" id="284593"/>
    <lineage>
        <taxon>Eukaryota</taxon>
        <taxon>Fungi</taxon>
        <taxon>Dikarya</taxon>
        <taxon>Ascomycota</taxon>
        <taxon>Saccharomycotina</taxon>
        <taxon>Saccharomycetes</taxon>
        <taxon>Saccharomycetales</taxon>
        <taxon>Saccharomycetaceae</taxon>
        <taxon>Nakaseomyces</taxon>
    </lineage>
</organism>
<sequence>MDTYSGQNGWADTSNASPWGDTNDTMPIDNSLSNSLSGLQLNEDINTVRANLTESIWGTERTGAPNNVETGLEAKDSLNVSTNFNELNTAILSPTSSTSNIEEQNSFTESLESWINEVRKTYNPQQLDIISIEEIPEREGLLFKHANYSVKHLIDLPNTEPPKNRTVVRRYSDFLWLQEVLLKRYPFRMIPDLPPKKIGSQNLDPVFLNKRRIGLSKFINLVMKHPKLSKDDLVLTFLTVPTDLTSWRKQVSYDTADEFTDKRISKDFVKIWKKDLAEIWNNTANCIDELIDKWTKISILVDRHEKRLQIIANERKIMNDLIHDVGNLTKSVYPIDQNPTILDINSGMTVISKHIEKTNENYNQQALDTKQKVLPKFRMYTDILRALKNVFERYKMLATNNVSMLQKHIDLNLQKLEDMKGKPDASGQEYDRIKTTIRKDRKIMYEQSNRAWLIRECILEEFTIFQETQFMITGCFQEWAKVQSTYSSLNLNEWENVTNHILEMPLSRE</sequence>